<dbReference type="EMBL" id="CR858930">
    <property type="protein sequence ID" value="CAH91128.1"/>
    <property type="molecule type" value="mRNA"/>
</dbReference>
<dbReference type="RefSeq" id="NP_001125660.1">
    <property type="nucleotide sequence ID" value="NM_001132188.1"/>
</dbReference>
<dbReference type="SMR" id="Q5RAT2"/>
<dbReference type="FunCoup" id="Q5RAT2">
    <property type="interactions" value="397"/>
</dbReference>
<dbReference type="STRING" id="9601.ENSPPYP00000017968"/>
<dbReference type="GlyCosmos" id="Q5RAT2">
    <property type="glycosylation" value="2 sites, No reported glycans"/>
</dbReference>
<dbReference type="GeneID" id="100172580"/>
<dbReference type="KEGG" id="pon:100172580"/>
<dbReference type="CTD" id="8614"/>
<dbReference type="eggNOG" id="ENOG502QU7E">
    <property type="taxonomic scope" value="Eukaryota"/>
</dbReference>
<dbReference type="InParanoid" id="Q5RAT2"/>
<dbReference type="OrthoDB" id="8931566at2759"/>
<dbReference type="Proteomes" id="UP000001595">
    <property type="component" value="Unplaced"/>
</dbReference>
<dbReference type="GO" id="GO:0005615">
    <property type="term" value="C:extracellular space"/>
    <property type="evidence" value="ECO:0007669"/>
    <property type="project" value="TreeGrafter"/>
</dbReference>
<dbReference type="GO" id="GO:0005179">
    <property type="term" value="F:hormone activity"/>
    <property type="evidence" value="ECO:0007669"/>
    <property type="project" value="UniProtKB-KW"/>
</dbReference>
<dbReference type="GO" id="GO:0006874">
    <property type="term" value="P:intracellular calcium ion homeostasis"/>
    <property type="evidence" value="ECO:0007669"/>
    <property type="project" value="TreeGrafter"/>
</dbReference>
<dbReference type="InterPro" id="IPR004978">
    <property type="entry name" value="Stanniocalcin"/>
</dbReference>
<dbReference type="PANTHER" id="PTHR11245">
    <property type="entry name" value="STANNIOCALCIN"/>
    <property type="match status" value="1"/>
</dbReference>
<dbReference type="PANTHER" id="PTHR11245:SF2">
    <property type="entry name" value="STANNIOCALCIN-2"/>
    <property type="match status" value="1"/>
</dbReference>
<dbReference type="Pfam" id="PF03298">
    <property type="entry name" value="Stanniocalcin"/>
    <property type="match status" value="1"/>
</dbReference>
<proteinExistence type="evidence at transcript level"/>
<feature type="signal peptide" evidence="3">
    <location>
        <begin position="1"/>
        <end position="24"/>
    </location>
</feature>
<feature type="chain" id="PRO_0000033306" description="Stanniocalcin-2">
    <location>
        <begin position="25"/>
        <end position="302"/>
    </location>
</feature>
<feature type="region of interest" description="Disordered" evidence="4">
    <location>
        <begin position="23"/>
        <end position="44"/>
    </location>
</feature>
<feature type="region of interest" description="Disordered" evidence="4">
    <location>
        <begin position="217"/>
        <end position="302"/>
    </location>
</feature>
<feature type="compositionally biased region" description="Basic and acidic residues" evidence="4">
    <location>
        <begin position="227"/>
        <end position="264"/>
    </location>
</feature>
<feature type="modified residue" description="Phosphoserine" evidence="2">
    <location>
        <position position="250"/>
    </location>
</feature>
<feature type="modified residue" description="Phosphoserine" evidence="2">
    <location>
        <position position="251"/>
    </location>
</feature>
<feature type="modified residue" description="Phosphothreonine" evidence="2">
    <location>
        <position position="254"/>
    </location>
</feature>
<feature type="glycosylation site" description="N-linked (GlcNAc...) asparagine" evidence="3">
    <location>
        <position position="73"/>
    </location>
</feature>
<feature type="glycosylation site" description="N-linked (GlcNAc...) asparagine" evidence="3">
    <location>
        <position position="74"/>
    </location>
</feature>
<keyword id="KW-1015">Disulfide bond</keyword>
<keyword id="KW-0325">Glycoprotein</keyword>
<keyword id="KW-0372">Hormone</keyword>
<keyword id="KW-0597">Phosphoprotein</keyword>
<keyword id="KW-1185">Reference proteome</keyword>
<keyword id="KW-0964">Secreted</keyword>
<keyword id="KW-0732">Signal</keyword>
<evidence type="ECO:0000250" key="1"/>
<evidence type="ECO:0000250" key="2">
    <source>
        <dbReference type="UniProtKB" id="O76061"/>
    </source>
</evidence>
<evidence type="ECO:0000255" key="3"/>
<evidence type="ECO:0000256" key="4">
    <source>
        <dbReference type="SAM" id="MobiDB-lite"/>
    </source>
</evidence>
<evidence type="ECO:0000305" key="5"/>
<sequence length="302" mass="33331">MCAERLGQFMTLALVLATFDPARGTDATNPPEGPQDRSPQQKGRLSLQNTAEIQHCLVNAGDVGCGVFECFENNSSEIRGLHGICMTFLHNAGKFDAQGKSFIKDALKCKAHALRHRFGCISRKCPAIREMVFQLQRECYLKHDLCAAAQENTRVIVEMIHFKDLLLHEPYVDLVNLLLTCGEEVKEAITHSVQVQCEQNWGSLCSILSFCTSAIQRPPTAPPERQPQVDRTKLSRAHHGEAGHHLPEPSSRETGRGAKGERGSKSHPNAHARGRVGGLGAQGPSGSSEWEDEQSEYSDIRR</sequence>
<protein>
    <recommendedName>
        <fullName>Stanniocalcin-2</fullName>
        <shortName>STC-2</shortName>
    </recommendedName>
</protein>
<gene>
    <name type="primary">STC2</name>
</gene>
<organism>
    <name type="scientific">Pongo abelii</name>
    <name type="common">Sumatran orangutan</name>
    <name type="synonym">Pongo pygmaeus abelii</name>
    <dbReference type="NCBI Taxonomy" id="9601"/>
    <lineage>
        <taxon>Eukaryota</taxon>
        <taxon>Metazoa</taxon>
        <taxon>Chordata</taxon>
        <taxon>Craniata</taxon>
        <taxon>Vertebrata</taxon>
        <taxon>Euteleostomi</taxon>
        <taxon>Mammalia</taxon>
        <taxon>Eutheria</taxon>
        <taxon>Euarchontoglires</taxon>
        <taxon>Primates</taxon>
        <taxon>Haplorrhini</taxon>
        <taxon>Catarrhini</taxon>
        <taxon>Hominidae</taxon>
        <taxon>Pongo</taxon>
    </lineage>
</organism>
<reference key="1">
    <citation type="submission" date="2004-11" db="EMBL/GenBank/DDBJ databases">
        <authorList>
            <consortium name="The German cDNA consortium"/>
        </authorList>
    </citation>
    <scope>NUCLEOTIDE SEQUENCE [LARGE SCALE MRNA]</scope>
    <source>
        <tissue>Kidney</tissue>
    </source>
</reference>
<comment type="function">
    <text evidence="1">Has an anti-hypocalcemic action on calcium and phosphate homeostasis.</text>
</comment>
<comment type="subunit">
    <text evidence="1">Homodimer; disulfide-linked.</text>
</comment>
<comment type="subcellular location">
    <subcellularLocation>
        <location evidence="5">Secreted</location>
    </subcellularLocation>
</comment>
<comment type="similarity">
    <text evidence="5">Belongs to the stanniocalcin family.</text>
</comment>
<accession>Q5RAT2</accession>
<name>STC2_PONAB</name>